<gene>
    <name evidence="1" type="primary">xseA</name>
    <name type="ordered locus">LPC_2470</name>
</gene>
<proteinExistence type="inferred from homology"/>
<evidence type="ECO:0000255" key="1">
    <source>
        <dbReference type="HAMAP-Rule" id="MF_00378"/>
    </source>
</evidence>
<comment type="function">
    <text evidence="1">Bidirectionally degrades single-stranded DNA into large acid-insoluble oligonucleotides, which are then degraded further into small acid-soluble oligonucleotides.</text>
</comment>
<comment type="catalytic activity">
    <reaction evidence="1">
        <text>Exonucleolytic cleavage in either 5'- to 3'- or 3'- to 5'-direction to yield nucleoside 5'-phosphates.</text>
        <dbReference type="EC" id="3.1.11.6"/>
    </reaction>
</comment>
<comment type="subunit">
    <text evidence="1">Heterooligomer composed of large and small subunits.</text>
</comment>
<comment type="subcellular location">
    <subcellularLocation>
        <location evidence="1">Cytoplasm</location>
    </subcellularLocation>
</comment>
<comment type="similarity">
    <text evidence="1">Belongs to the XseA family.</text>
</comment>
<sequence>MSSQLPILTVSQLNRQVKGFLENEIGLVHVEGEISNLSKPSSGHYYFTLKDSTAQIRCAFFKNRHSSSLLRNFNDGQQIVASGKLSLYEARGEYQLIVEEIVEAGMGVLYQRFEELKIKLASEGLFNPERKKTLPRIPETIGIITSPTGAAIQDILSTLARRFPIARVIIYPSEVQGQTAPQQLVNALKLANAHKRCQVLILARGGGSIEDLWAFNDEYLARQIAISEIPVVSGIGHETDFTIADFVADYRAETPTAAATAVTPNCIELFNILDTAIYRLHDAIIRLIKGLQLKLNHLIDKIASPRQAISTYWQTLDYLERQLISAMTQFINLNINKVNIFSTQLQASNPKIQIERTKIQLQQLIMQLTQEIRIKVNQLKNQLSTNLSTLHAVSPLATLDRGYAIVSKNQRILFAAQQAQIGDTINIRLAKGSLACEVTQIKD</sequence>
<feature type="chain" id="PRO_1000048776" description="Exodeoxyribonuclease 7 large subunit">
    <location>
        <begin position="1"/>
        <end position="443"/>
    </location>
</feature>
<dbReference type="EC" id="3.1.11.6" evidence="1"/>
<dbReference type="EMBL" id="CP000675">
    <property type="protein sequence ID" value="ABQ56390.1"/>
    <property type="molecule type" value="Genomic_DNA"/>
</dbReference>
<dbReference type="RefSeq" id="WP_011945942.1">
    <property type="nucleotide sequence ID" value="NC_009494.2"/>
</dbReference>
<dbReference type="SMR" id="A5IG90"/>
<dbReference type="KEGG" id="lpc:LPC_2470"/>
<dbReference type="HOGENOM" id="CLU_023625_3_1_6"/>
<dbReference type="GO" id="GO:0005737">
    <property type="term" value="C:cytoplasm"/>
    <property type="evidence" value="ECO:0007669"/>
    <property type="project" value="UniProtKB-SubCell"/>
</dbReference>
<dbReference type="GO" id="GO:0009318">
    <property type="term" value="C:exodeoxyribonuclease VII complex"/>
    <property type="evidence" value="ECO:0007669"/>
    <property type="project" value="InterPro"/>
</dbReference>
<dbReference type="GO" id="GO:0008855">
    <property type="term" value="F:exodeoxyribonuclease VII activity"/>
    <property type="evidence" value="ECO:0007669"/>
    <property type="project" value="UniProtKB-UniRule"/>
</dbReference>
<dbReference type="GO" id="GO:0003676">
    <property type="term" value="F:nucleic acid binding"/>
    <property type="evidence" value="ECO:0007669"/>
    <property type="project" value="InterPro"/>
</dbReference>
<dbReference type="GO" id="GO:0006308">
    <property type="term" value="P:DNA catabolic process"/>
    <property type="evidence" value="ECO:0007669"/>
    <property type="project" value="UniProtKB-UniRule"/>
</dbReference>
<dbReference type="CDD" id="cd04489">
    <property type="entry name" value="ExoVII_LU_OBF"/>
    <property type="match status" value="1"/>
</dbReference>
<dbReference type="Gene3D" id="2.40.50.140">
    <property type="entry name" value="Nucleic acid-binding proteins"/>
    <property type="match status" value="1"/>
</dbReference>
<dbReference type="HAMAP" id="MF_00378">
    <property type="entry name" value="Exonuc_7_L"/>
    <property type="match status" value="1"/>
</dbReference>
<dbReference type="InterPro" id="IPR003753">
    <property type="entry name" value="Exonuc_VII_L"/>
</dbReference>
<dbReference type="InterPro" id="IPR020579">
    <property type="entry name" value="Exonuc_VII_lsu_C"/>
</dbReference>
<dbReference type="InterPro" id="IPR012340">
    <property type="entry name" value="NA-bd_OB-fold"/>
</dbReference>
<dbReference type="InterPro" id="IPR025824">
    <property type="entry name" value="OB-fold_nuc-bd_dom"/>
</dbReference>
<dbReference type="NCBIfam" id="TIGR00237">
    <property type="entry name" value="xseA"/>
    <property type="match status" value="1"/>
</dbReference>
<dbReference type="PANTHER" id="PTHR30008">
    <property type="entry name" value="EXODEOXYRIBONUCLEASE 7 LARGE SUBUNIT"/>
    <property type="match status" value="1"/>
</dbReference>
<dbReference type="PANTHER" id="PTHR30008:SF0">
    <property type="entry name" value="EXODEOXYRIBONUCLEASE 7 LARGE SUBUNIT"/>
    <property type="match status" value="1"/>
</dbReference>
<dbReference type="Pfam" id="PF02601">
    <property type="entry name" value="Exonuc_VII_L"/>
    <property type="match status" value="1"/>
</dbReference>
<dbReference type="Pfam" id="PF13742">
    <property type="entry name" value="tRNA_anti_2"/>
    <property type="match status" value="1"/>
</dbReference>
<accession>A5IG90</accession>
<reference key="1">
    <citation type="submission" date="2006-11" db="EMBL/GenBank/DDBJ databases">
        <title>Identification and characterization of a new conjugation/ type IVA secretion system (trb/tra) of L. pneumophila Corby localized on a mobile genomic island.</title>
        <authorList>
            <person name="Gloeckner G."/>
            <person name="Albert-Weissenberger C."/>
            <person name="Weinmann E."/>
            <person name="Jacobi S."/>
            <person name="Schunder E."/>
            <person name="Steinert M."/>
            <person name="Buchrieser C."/>
            <person name="Hacker J."/>
            <person name="Heuner K."/>
        </authorList>
    </citation>
    <scope>NUCLEOTIDE SEQUENCE [LARGE SCALE GENOMIC DNA]</scope>
    <source>
        <strain>Corby</strain>
    </source>
</reference>
<protein>
    <recommendedName>
        <fullName evidence="1">Exodeoxyribonuclease 7 large subunit</fullName>
        <ecNumber evidence="1">3.1.11.6</ecNumber>
    </recommendedName>
    <alternativeName>
        <fullName evidence="1">Exodeoxyribonuclease VII large subunit</fullName>
        <shortName evidence="1">Exonuclease VII large subunit</shortName>
    </alternativeName>
</protein>
<organism>
    <name type="scientific">Legionella pneumophila (strain Corby)</name>
    <dbReference type="NCBI Taxonomy" id="400673"/>
    <lineage>
        <taxon>Bacteria</taxon>
        <taxon>Pseudomonadati</taxon>
        <taxon>Pseudomonadota</taxon>
        <taxon>Gammaproteobacteria</taxon>
        <taxon>Legionellales</taxon>
        <taxon>Legionellaceae</taxon>
        <taxon>Legionella</taxon>
    </lineage>
</organism>
<name>EX7L_LEGPC</name>
<keyword id="KW-0963">Cytoplasm</keyword>
<keyword id="KW-0269">Exonuclease</keyword>
<keyword id="KW-0378">Hydrolase</keyword>
<keyword id="KW-0540">Nuclease</keyword>